<gene>
    <name type="primary">NOL4</name>
    <name type="synonym">NOLP</name>
    <name type="ORF">HRIHFB2255</name>
</gene>
<evidence type="ECO:0000256" key="1">
    <source>
        <dbReference type="SAM" id="MobiDB-lite"/>
    </source>
</evidence>
<evidence type="ECO:0000269" key="2">
    <source>
    </source>
</evidence>
<evidence type="ECO:0000269" key="3">
    <source>
    </source>
</evidence>
<evidence type="ECO:0000303" key="4">
    <source>
    </source>
</evidence>
<evidence type="ECO:0000303" key="5">
    <source>
    </source>
</evidence>
<evidence type="ECO:0000303" key="6">
    <source ref="5"/>
</evidence>
<evidence type="ECO:0000303" key="7">
    <source ref="6"/>
</evidence>
<evidence type="ECO:0000305" key="8"/>
<dbReference type="EMBL" id="AB017800">
    <property type="protein sequence ID" value="BAA34576.1"/>
    <property type="status" value="ALT_SEQ"/>
    <property type="molecule type" value="mRNA"/>
</dbReference>
<dbReference type="EMBL" id="AK296539">
    <property type="protein sequence ID" value="BAH12383.1"/>
    <property type="molecule type" value="mRNA"/>
</dbReference>
<dbReference type="EMBL" id="AK299850">
    <property type="protein sequence ID" value="BAG61712.1"/>
    <property type="molecule type" value="mRNA"/>
</dbReference>
<dbReference type="EMBL" id="AC010798">
    <property type="status" value="NOT_ANNOTATED_CDS"/>
    <property type="molecule type" value="Genomic_DNA"/>
</dbReference>
<dbReference type="EMBL" id="AC018972">
    <property type="status" value="NOT_ANNOTATED_CDS"/>
    <property type="molecule type" value="Genomic_DNA"/>
</dbReference>
<dbReference type="EMBL" id="AC087397">
    <property type="status" value="NOT_ANNOTATED_CDS"/>
    <property type="molecule type" value="Genomic_DNA"/>
</dbReference>
<dbReference type="EMBL" id="AC104985">
    <property type="status" value="NOT_ANNOTATED_CDS"/>
    <property type="molecule type" value="Genomic_DNA"/>
</dbReference>
<dbReference type="EMBL" id="BC000313">
    <property type="protein sequence ID" value="AAH00313.1"/>
    <property type="status" value="ALT_SEQ"/>
    <property type="molecule type" value="mRNA"/>
</dbReference>
<dbReference type="EMBL" id="BT006763">
    <property type="protein sequence ID" value="AAP35409.1"/>
    <property type="molecule type" value="mRNA"/>
</dbReference>
<dbReference type="EMBL" id="CR456730">
    <property type="protein sequence ID" value="CAG33011.1"/>
    <property type="molecule type" value="mRNA"/>
</dbReference>
<dbReference type="EMBL" id="AB015339">
    <property type="protein sequence ID" value="BAA34797.1"/>
    <property type="molecule type" value="mRNA"/>
</dbReference>
<dbReference type="CCDS" id="CCDS11907.2">
    <molecule id="O94818-1"/>
</dbReference>
<dbReference type="CCDS" id="CCDS56058.1">
    <molecule id="O94818-4"/>
</dbReference>
<dbReference type="CCDS" id="CCDS56059.1">
    <molecule id="O94818-3"/>
</dbReference>
<dbReference type="CCDS" id="CCDS59308.1">
    <molecule id="O94818-2"/>
</dbReference>
<dbReference type="PIR" id="JE0335">
    <property type="entry name" value="JE0335"/>
</dbReference>
<dbReference type="RefSeq" id="NP_001185475.1">
    <property type="nucleotide sequence ID" value="NM_001198546.1"/>
</dbReference>
<dbReference type="RefSeq" id="NP_001185476.1">
    <molecule id="O94818-3"/>
    <property type="nucleotide sequence ID" value="NM_001198547.2"/>
</dbReference>
<dbReference type="RefSeq" id="NP_001185477.1">
    <molecule id="O94818-2"/>
    <property type="nucleotide sequence ID" value="NM_001198548.1"/>
</dbReference>
<dbReference type="RefSeq" id="NP_001185478.1">
    <molecule id="O94818-4"/>
    <property type="nucleotide sequence ID" value="NM_001198549.2"/>
</dbReference>
<dbReference type="RefSeq" id="NP_001269456.1">
    <property type="nucleotide sequence ID" value="NM_001282527.1"/>
</dbReference>
<dbReference type="RefSeq" id="NP_001371401.1">
    <molecule id="O94818-4"/>
    <property type="nucleotide sequence ID" value="NM_001384472.1"/>
</dbReference>
<dbReference type="RefSeq" id="NP_003778.2">
    <molecule id="O94818-1"/>
    <property type="nucleotide sequence ID" value="NM_003787.5"/>
</dbReference>
<dbReference type="RefSeq" id="XP_006722626.1">
    <molecule id="O94818-1"/>
    <property type="nucleotide sequence ID" value="XM_006722563.4"/>
</dbReference>
<dbReference type="RefSeq" id="XP_011524539.1">
    <molecule id="O94818-1"/>
    <property type="nucleotide sequence ID" value="XM_011526237.3"/>
</dbReference>
<dbReference type="RefSeq" id="XP_011524540.1">
    <property type="nucleotide sequence ID" value="XM_011526238.1"/>
</dbReference>
<dbReference type="RefSeq" id="XP_016881548.1">
    <property type="nucleotide sequence ID" value="XM_017026059.1"/>
</dbReference>
<dbReference type="RefSeq" id="XP_047293857.1">
    <molecule id="O94818-1"/>
    <property type="nucleotide sequence ID" value="XM_047437901.1"/>
</dbReference>
<dbReference type="RefSeq" id="XP_047293858.1">
    <molecule id="O94818-1"/>
    <property type="nucleotide sequence ID" value="XM_047437902.1"/>
</dbReference>
<dbReference type="RefSeq" id="XP_054175266.1">
    <molecule id="O94818-1"/>
    <property type="nucleotide sequence ID" value="XM_054319291.1"/>
</dbReference>
<dbReference type="RefSeq" id="XP_054175267.1">
    <molecule id="O94818-1"/>
    <property type="nucleotide sequence ID" value="XM_054319292.1"/>
</dbReference>
<dbReference type="BioGRID" id="114256">
    <property type="interactions" value="57"/>
</dbReference>
<dbReference type="FunCoup" id="O94818">
    <property type="interactions" value="544"/>
</dbReference>
<dbReference type="IntAct" id="O94818">
    <property type="interactions" value="47"/>
</dbReference>
<dbReference type="MINT" id="O94818"/>
<dbReference type="STRING" id="9606.ENSP00000261592"/>
<dbReference type="iPTMnet" id="O94818"/>
<dbReference type="PhosphoSitePlus" id="O94818"/>
<dbReference type="BioMuta" id="NOL4"/>
<dbReference type="jPOST" id="O94818"/>
<dbReference type="MassIVE" id="O94818"/>
<dbReference type="PaxDb" id="9606-ENSP00000261592"/>
<dbReference type="PeptideAtlas" id="O94818"/>
<dbReference type="ProteomicsDB" id="25628"/>
<dbReference type="ProteomicsDB" id="50459">
    <molecule id="O94818-1"/>
</dbReference>
<dbReference type="ProteomicsDB" id="50460">
    <molecule id="O94818-2"/>
</dbReference>
<dbReference type="ProteomicsDB" id="50461">
    <molecule id="O94818-3"/>
</dbReference>
<dbReference type="Antibodypedia" id="8389">
    <property type="antibodies" value="115 antibodies from 24 providers"/>
</dbReference>
<dbReference type="DNASU" id="8715"/>
<dbReference type="Ensembl" id="ENST00000261592.10">
    <molecule id="O94818-1"/>
    <property type="protein sequence ID" value="ENSP00000261592.4"/>
    <property type="gene ID" value="ENSG00000101746.16"/>
</dbReference>
<dbReference type="Ensembl" id="ENST00000535384.5">
    <molecule id="O94818-4"/>
    <property type="protein sequence ID" value="ENSP00000445733.1"/>
    <property type="gene ID" value="ENSG00000101746.16"/>
</dbReference>
<dbReference type="Ensembl" id="ENST00000538587.5">
    <molecule id="O94818-3"/>
    <property type="protein sequence ID" value="ENSP00000443472.1"/>
    <property type="gene ID" value="ENSG00000101746.16"/>
</dbReference>
<dbReference type="Ensembl" id="ENST00000589544.5">
    <molecule id="O94818-2"/>
    <property type="protein sequence ID" value="ENSP00000465450.1"/>
    <property type="gene ID" value="ENSG00000101746.16"/>
</dbReference>
<dbReference type="GeneID" id="8715"/>
<dbReference type="KEGG" id="hsa:8715"/>
<dbReference type="MANE-Select" id="ENST00000261592.10">
    <property type="protein sequence ID" value="ENSP00000261592.4"/>
    <property type="RefSeq nucleotide sequence ID" value="NM_003787.5"/>
    <property type="RefSeq protein sequence ID" value="NP_003778.2"/>
</dbReference>
<dbReference type="UCSC" id="uc002kxt.5">
    <molecule id="O94818-1"/>
    <property type="organism name" value="human"/>
</dbReference>
<dbReference type="AGR" id="HGNC:7870"/>
<dbReference type="CTD" id="8715"/>
<dbReference type="DisGeNET" id="8715"/>
<dbReference type="GeneCards" id="NOL4"/>
<dbReference type="HGNC" id="HGNC:7870">
    <property type="gene designation" value="NOL4"/>
</dbReference>
<dbReference type="HPA" id="ENSG00000101746">
    <property type="expression patterns" value="Group enriched (brain, pituitary gland, retina, testis)"/>
</dbReference>
<dbReference type="MIM" id="603577">
    <property type="type" value="gene"/>
</dbReference>
<dbReference type="neXtProt" id="NX_O94818"/>
<dbReference type="OpenTargets" id="ENSG00000101746"/>
<dbReference type="PharmGKB" id="PA31674"/>
<dbReference type="VEuPathDB" id="HostDB:ENSG00000101746"/>
<dbReference type="eggNOG" id="ENOG502QR3R">
    <property type="taxonomic scope" value="Eukaryota"/>
</dbReference>
<dbReference type="GeneTree" id="ENSGT00940000159992"/>
<dbReference type="HOGENOM" id="CLU_020587_0_0_1"/>
<dbReference type="InParanoid" id="O94818"/>
<dbReference type="OMA" id="XSRPIPS"/>
<dbReference type="OrthoDB" id="10047222at2759"/>
<dbReference type="PAN-GO" id="O94818">
    <property type="GO annotations" value="0 GO annotations based on evolutionary models"/>
</dbReference>
<dbReference type="PhylomeDB" id="O94818"/>
<dbReference type="TreeFam" id="TF325594"/>
<dbReference type="PathwayCommons" id="O94818"/>
<dbReference type="SignaLink" id="O94818"/>
<dbReference type="BioGRID-ORCS" id="8715">
    <property type="hits" value="6 hits in 1149 CRISPR screens"/>
</dbReference>
<dbReference type="CD-CODE" id="91857CE7">
    <property type="entry name" value="Nucleolus"/>
</dbReference>
<dbReference type="ChiTaRS" id="NOL4">
    <property type="organism name" value="human"/>
</dbReference>
<dbReference type="GenomeRNAi" id="8715"/>
<dbReference type="Pharos" id="O94818">
    <property type="development level" value="Tbio"/>
</dbReference>
<dbReference type="PRO" id="PR:O94818"/>
<dbReference type="Proteomes" id="UP000005640">
    <property type="component" value="Chromosome 18"/>
</dbReference>
<dbReference type="RNAct" id="O94818">
    <property type="molecule type" value="protein"/>
</dbReference>
<dbReference type="Bgee" id="ENSG00000101746">
    <property type="expression patterns" value="Expressed in cortical plate and 134 other cell types or tissues"/>
</dbReference>
<dbReference type="ExpressionAtlas" id="O94818">
    <property type="expression patterns" value="baseline and differential"/>
</dbReference>
<dbReference type="GO" id="GO:0005730">
    <property type="term" value="C:nucleolus"/>
    <property type="evidence" value="ECO:0000304"/>
    <property type="project" value="ProtInc"/>
</dbReference>
<dbReference type="GO" id="GO:0003723">
    <property type="term" value="F:RNA binding"/>
    <property type="evidence" value="ECO:0000304"/>
    <property type="project" value="ProtInc"/>
</dbReference>
<dbReference type="InterPro" id="IPR056549">
    <property type="entry name" value="HTH_NOL4"/>
</dbReference>
<dbReference type="InterPro" id="IPR039788">
    <property type="entry name" value="NOL4/NOL4L"/>
</dbReference>
<dbReference type="PANTHER" id="PTHR12449">
    <property type="entry name" value="DEATH DOMAIN-CONTAINING PROTEIN"/>
    <property type="match status" value="1"/>
</dbReference>
<dbReference type="PANTHER" id="PTHR12449:SF17">
    <property type="entry name" value="NUCLEOLAR PROTEIN 4"/>
    <property type="match status" value="1"/>
</dbReference>
<dbReference type="Pfam" id="PF23079">
    <property type="entry name" value="HTH_NOL4_2nd"/>
    <property type="match status" value="1"/>
</dbReference>
<name>NOL4_HUMAN</name>
<organism>
    <name type="scientific">Homo sapiens</name>
    <name type="common">Human</name>
    <dbReference type="NCBI Taxonomy" id="9606"/>
    <lineage>
        <taxon>Eukaryota</taxon>
        <taxon>Metazoa</taxon>
        <taxon>Chordata</taxon>
        <taxon>Craniata</taxon>
        <taxon>Vertebrata</taxon>
        <taxon>Euteleostomi</taxon>
        <taxon>Mammalia</taxon>
        <taxon>Eutheria</taxon>
        <taxon>Euarchontoglires</taxon>
        <taxon>Primates</taxon>
        <taxon>Haplorrhini</taxon>
        <taxon>Catarrhini</taxon>
        <taxon>Hominidae</taxon>
        <taxon>Homo</taxon>
    </lineage>
</organism>
<comment type="interaction">
    <interactant intactId="EBI-10190763">
        <id>O94818-2</id>
    </interactant>
    <interactant intactId="EBI-2817707">
        <id>Q9BXJ5</id>
        <label>C1QTNF2</label>
    </interactant>
    <organismsDiffer>false</organismsDiffer>
    <experiments>3</experiments>
</comment>
<comment type="interaction">
    <interactant intactId="EBI-10190763">
        <id>O94818-2</id>
    </interactant>
    <interactant intactId="EBI-10171858">
        <id>Q13363-2</id>
        <label>CTBP1</label>
    </interactant>
    <organismsDiffer>false</organismsDiffer>
    <experiments>4</experiments>
</comment>
<comment type="interaction">
    <interactant intactId="EBI-10190763">
        <id>O94818-2</id>
    </interactant>
    <interactant intactId="EBI-741533">
        <id>P56545</id>
        <label>CTBP2</label>
    </interactant>
    <organismsDiffer>false</organismsDiffer>
    <experiments>3</experiments>
</comment>
<comment type="interaction">
    <interactant intactId="EBI-10190763">
        <id>O94818-2</id>
    </interactant>
    <interactant intactId="EBI-10171902">
        <id>P56545-3</id>
        <label>CTBP2</label>
    </interactant>
    <organismsDiffer>false</organismsDiffer>
    <experiments>3</experiments>
</comment>
<comment type="interaction">
    <interactant intactId="EBI-10190763">
        <id>O94818-2</id>
    </interactant>
    <interactant intactId="EBI-10175124">
        <id>Q8IZU0</id>
        <label>FAM9B</label>
    </interactant>
    <organismsDiffer>false</organismsDiffer>
    <experiments>3</experiments>
</comment>
<comment type="interaction">
    <interactant intactId="EBI-10190763">
        <id>O94818-2</id>
    </interactant>
    <interactant intactId="EBI-739552">
        <id>P43364</id>
        <label>MAGEA11</label>
    </interactant>
    <organismsDiffer>false</organismsDiffer>
    <experiments>3</experiments>
</comment>
<comment type="interaction">
    <interactant intactId="EBI-10190763">
        <id>O94818-2</id>
    </interactant>
    <interactant intactId="EBI-16439278">
        <id>Q6FHY5</id>
        <label>MEOX2</label>
    </interactant>
    <organismsDiffer>false</organismsDiffer>
    <experiments>3</experiments>
</comment>
<comment type="interaction">
    <interactant intactId="EBI-10190763">
        <id>O94818-2</id>
    </interactant>
    <interactant intactId="EBI-395883">
        <id>P07237</id>
        <label>P4HB</label>
    </interactant>
    <organismsDiffer>false</organismsDiffer>
    <experiments>3</experiments>
</comment>
<comment type="interaction">
    <interactant intactId="EBI-10190763">
        <id>O94818-2</id>
    </interactant>
    <interactant intactId="EBI-1773976">
        <id>Q8IX90</id>
        <label>SKA3</label>
    </interactant>
    <organismsDiffer>false</organismsDiffer>
    <experiments>3</experiments>
</comment>
<comment type="interaction">
    <interactant intactId="EBI-10190763">
        <id>O94818-2</id>
    </interactant>
    <interactant intactId="EBI-749483">
        <id>O75971</id>
        <label>SNAPC5</label>
    </interactant>
    <organismsDiffer>false</organismsDiffer>
    <experiments>3</experiments>
</comment>
<comment type="interaction">
    <interactant intactId="EBI-10190763">
        <id>O94818-2</id>
    </interactant>
    <interactant intactId="EBI-12004298">
        <id>O75971-2</id>
        <label>SNAPC5</label>
    </interactant>
    <organismsDiffer>false</organismsDiffer>
    <experiments>3</experiments>
</comment>
<comment type="interaction">
    <interactant intactId="EBI-10190763">
        <id>O94818-2</id>
    </interactant>
    <interactant intactId="EBI-746341">
        <id>Q8N6V9</id>
        <label>TEX9</label>
    </interactant>
    <organismsDiffer>false</organismsDiffer>
    <experiments>6</experiments>
</comment>
<comment type="interaction">
    <interactant intactId="EBI-10190763">
        <id>O94818-2</id>
    </interactant>
    <interactant intactId="EBI-20110775">
        <id>Q8NA42</id>
        <label>ZNF383</label>
    </interactant>
    <organismsDiffer>false</organismsDiffer>
    <experiments>3</experiments>
</comment>
<comment type="subcellular location">
    <subcellularLocation>
        <location evidence="2 3">Nucleus</location>
        <location evidence="2 3">Nucleolus</location>
    </subcellularLocation>
</comment>
<comment type="alternative products">
    <event type="alternative splicing"/>
    <isoform>
        <id>O94818-1</id>
        <name>1</name>
        <sequence type="displayed"/>
    </isoform>
    <isoform>
        <id>O94818-2</id>
        <name>2</name>
        <sequence type="described" ref="VSP_010080"/>
    </isoform>
    <isoform>
        <id>O94818-3</id>
        <name>3</name>
        <sequence type="described" ref="VSP_043344"/>
    </isoform>
    <isoform>
        <id>O94818-4</id>
        <name>4</name>
        <sequence type="described" ref="VSP_045836"/>
    </isoform>
</comment>
<comment type="tissue specificity">
    <text evidence="2">Expressed predominantly in fetal brain, adult brain and testis.</text>
</comment>
<comment type="sequence caution" evidence="8">
    <conflict type="miscellaneous discrepancy">
        <sequence resource="EMBL-CDS" id="AAH00313"/>
    </conflict>
    <text>Contaminating sequence. Sequence of unknown origin in the N-terminal part.</text>
</comment>
<comment type="sequence caution" evidence="8">
    <conflict type="erroneous termination">
        <sequence resource="EMBL-CDS" id="BAA34576"/>
    </conflict>
    <text>Truncated C-terminus.</text>
</comment>
<comment type="sequence caution" evidence="8">
    <conflict type="frameshift">
        <sequence resource="EMBL-CDS" id="BAA34576"/>
    </conflict>
</comment>
<proteinExistence type="evidence at protein level"/>
<feature type="chain" id="PRO_0000096935" description="Nucleolar protein 4">
    <location>
        <begin position="1"/>
        <end position="638"/>
    </location>
</feature>
<feature type="region of interest" description="Disordered" evidence="1">
    <location>
        <begin position="210"/>
        <end position="312"/>
    </location>
</feature>
<feature type="region of interest" description="Disordered" evidence="1">
    <location>
        <begin position="343"/>
        <end position="403"/>
    </location>
</feature>
<feature type="region of interest" description="Disordered" evidence="1">
    <location>
        <begin position="503"/>
        <end position="535"/>
    </location>
</feature>
<feature type="region of interest" description="Disordered" evidence="1">
    <location>
        <begin position="573"/>
        <end position="603"/>
    </location>
</feature>
<feature type="compositionally biased region" description="Acidic residues" evidence="1">
    <location>
        <begin position="211"/>
        <end position="225"/>
    </location>
</feature>
<feature type="compositionally biased region" description="Polar residues" evidence="1">
    <location>
        <begin position="229"/>
        <end position="254"/>
    </location>
</feature>
<feature type="compositionally biased region" description="Polar residues" evidence="1">
    <location>
        <begin position="263"/>
        <end position="281"/>
    </location>
</feature>
<feature type="compositionally biased region" description="Polar residues" evidence="1">
    <location>
        <begin position="302"/>
        <end position="312"/>
    </location>
</feature>
<feature type="compositionally biased region" description="Polar residues" evidence="1">
    <location>
        <begin position="351"/>
        <end position="363"/>
    </location>
</feature>
<feature type="compositionally biased region" description="Basic and acidic residues" evidence="1">
    <location>
        <begin position="364"/>
        <end position="374"/>
    </location>
</feature>
<feature type="compositionally biased region" description="Basic and acidic residues" evidence="1">
    <location>
        <begin position="391"/>
        <end position="403"/>
    </location>
</feature>
<feature type="compositionally biased region" description="Basic and acidic residues" evidence="1">
    <location>
        <begin position="503"/>
        <end position="515"/>
    </location>
</feature>
<feature type="compositionally biased region" description="Low complexity" evidence="1">
    <location>
        <begin position="588"/>
        <end position="597"/>
    </location>
</feature>
<feature type="splice variant" id="VSP_045836" description="In isoform 4." evidence="4">
    <location>
        <begin position="1"/>
        <end position="285"/>
    </location>
</feature>
<feature type="splice variant" id="VSP_043344" description="In isoform 3." evidence="4">
    <original>MESERDMYRQFQDWCLRTYGDSGKTKTVTRKKYERIVQLLNGSESSSTDNAKFKFWVKSKGFQLGQPDEVRGGGGGAKQVLYVPVKT</original>
    <variation>MADLMQETFLHHA</variation>
    <location>
        <begin position="1"/>
        <end position="87"/>
    </location>
</feature>
<feature type="splice variant" id="VSP_010080" description="In isoform 2." evidence="5 6 7">
    <location>
        <begin position="413"/>
        <end position="514"/>
    </location>
</feature>
<feature type="sequence conflict" description="In Ref. 2; BAH12383." evidence="8" ref="2">
    <original>Q</original>
    <variation>H</variation>
    <location>
        <position position="637"/>
    </location>
</feature>
<sequence length="638" mass="71357">MESERDMYRQFQDWCLRTYGDSGKTKTVTRKKYERIVQLLNGSESSSTDNAKFKFWVKSKGFQLGQPDEVRGGGGGAKQVLYVPVKTTDGVGVDEKLSLRRVAVVEDFFDIIYSMHVETGPNGEQIRKHAGQKRTYKAISESYAFLPREAVTRFLMSCSECQKRMHLNPDGTDHKDNGKPPTLVTSMIDYNMPITMAYMKHMKLQLLNSQQDEDESSIESDEFDMSDSTRMSAVNSDLSSNLEERMQSPQNLHGQQDDDSAAESFNGNETLGHSSIASGGTHSREMGDSNSDGKTGLEQDEQPLNLSDSPLSAQLTSEYRIDDHNSNGKNKYKNLLISDLKMEREARENGSKSPAHSYSSYDSGKNESVDRGAEDLSLNRGDEDEDDHEDHDDSEKVNETDGVEAERLKAFNMFVRLFVDENLDRMVPISKQPKEKIQAIIDSCRRQFPEYQERARKRIRTYLKSCRRMKRSGFEMSRPIPSHLTSAVAESILASACESESRNAAKRMRLERQQDESAPADKQCKPEATQATYSTSAVPGSQDVLYINGNGTYSYHSYRGLGGGLLNLNDASSSGPTDLSMKRQLATSSGSSSSSNSRPQLSPTEINAVRQLVAGYRESAAFLLRSADELENLILQQN</sequence>
<reference key="1">
    <citation type="journal article" date="1998" name="Biochem. Biophys. Res. Commun.">
        <title>NOLP: identification of a novel human nucleolar protein and determination of sequence requirements for its nucleolar localization.</title>
        <authorList>
            <person name="Ueki N."/>
            <person name="Kondo M."/>
            <person name="Seki N."/>
            <person name="Yano K."/>
            <person name="Oda T."/>
            <person name="Masuho Y."/>
            <person name="Muramatsu M.-A."/>
        </authorList>
    </citation>
    <scope>NUCLEOTIDE SEQUENCE [MRNA] (ISOFORM 1)</scope>
    <scope>SUBCELLULAR LOCATION</scope>
    <scope>TISSUE SPECIFICITY</scope>
    <source>
        <tissue>Fetal brain</tissue>
    </source>
</reference>
<reference key="2">
    <citation type="journal article" date="2004" name="Nat. Genet.">
        <title>Complete sequencing and characterization of 21,243 full-length human cDNAs.</title>
        <authorList>
            <person name="Ota T."/>
            <person name="Suzuki Y."/>
            <person name="Nishikawa T."/>
            <person name="Otsuki T."/>
            <person name="Sugiyama T."/>
            <person name="Irie R."/>
            <person name="Wakamatsu A."/>
            <person name="Hayashi K."/>
            <person name="Sato H."/>
            <person name="Nagai K."/>
            <person name="Kimura K."/>
            <person name="Makita H."/>
            <person name="Sekine M."/>
            <person name="Obayashi M."/>
            <person name="Nishi T."/>
            <person name="Shibahara T."/>
            <person name="Tanaka T."/>
            <person name="Ishii S."/>
            <person name="Yamamoto J."/>
            <person name="Saito K."/>
            <person name="Kawai Y."/>
            <person name="Isono Y."/>
            <person name="Nakamura Y."/>
            <person name="Nagahari K."/>
            <person name="Murakami K."/>
            <person name="Yasuda T."/>
            <person name="Iwayanagi T."/>
            <person name="Wagatsuma M."/>
            <person name="Shiratori A."/>
            <person name="Sudo H."/>
            <person name="Hosoiri T."/>
            <person name="Kaku Y."/>
            <person name="Kodaira H."/>
            <person name="Kondo H."/>
            <person name="Sugawara M."/>
            <person name="Takahashi M."/>
            <person name="Kanda K."/>
            <person name="Yokoi T."/>
            <person name="Furuya T."/>
            <person name="Kikkawa E."/>
            <person name="Omura Y."/>
            <person name="Abe K."/>
            <person name="Kamihara K."/>
            <person name="Katsuta N."/>
            <person name="Sato K."/>
            <person name="Tanikawa M."/>
            <person name="Yamazaki M."/>
            <person name="Ninomiya K."/>
            <person name="Ishibashi T."/>
            <person name="Yamashita H."/>
            <person name="Murakawa K."/>
            <person name="Fujimori K."/>
            <person name="Tanai H."/>
            <person name="Kimata M."/>
            <person name="Watanabe M."/>
            <person name="Hiraoka S."/>
            <person name="Chiba Y."/>
            <person name="Ishida S."/>
            <person name="Ono Y."/>
            <person name="Takiguchi S."/>
            <person name="Watanabe S."/>
            <person name="Yosida M."/>
            <person name="Hotuta T."/>
            <person name="Kusano J."/>
            <person name="Kanehori K."/>
            <person name="Takahashi-Fujii A."/>
            <person name="Hara H."/>
            <person name="Tanase T.-O."/>
            <person name="Nomura Y."/>
            <person name="Togiya S."/>
            <person name="Komai F."/>
            <person name="Hara R."/>
            <person name="Takeuchi K."/>
            <person name="Arita M."/>
            <person name="Imose N."/>
            <person name="Musashino K."/>
            <person name="Yuuki H."/>
            <person name="Oshima A."/>
            <person name="Sasaki N."/>
            <person name="Aotsuka S."/>
            <person name="Yoshikawa Y."/>
            <person name="Matsunawa H."/>
            <person name="Ichihara T."/>
            <person name="Shiohata N."/>
            <person name="Sano S."/>
            <person name="Moriya S."/>
            <person name="Momiyama H."/>
            <person name="Satoh N."/>
            <person name="Takami S."/>
            <person name="Terashima Y."/>
            <person name="Suzuki O."/>
            <person name="Nakagawa S."/>
            <person name="Senoh A."/>
            <person name="Mizoguchi H."/>
            <person name="Goto Y."/>
            <person name="Shimizu F."/>
            <person name="Wakebe H."/>
            <person name="Hishigaki H."/>
            <person name="Watanabe T."/>
            <person name="Sugiyama A."/>
            <person name="Takemoto M."/>
            <person name="Kawakami B."/>
            <person name="Yamazaki M."/>
            <person name="Watanabe K."/>
            <person name="Kumagai A."/>
            <person name="Itakura S."/>
            <person name="Fukuzumi Y."/>
            <person name="Fujimori Y."/>
            <person name="Komiyama M."/>
            <person name="Tashiro H."/>
            <person name="Tanigami A."/>
            <person name="Fujiwara T."/>
            <person name="Ono T."/>
            <person name="Yamada K."/>
            <person name="Fujii Y."/>
            <person name="Ozaki K."/>
            <person name="Hirao M."/>
            <person name="Ohmori Y."/>
            <person name="Kawabata A."/>
            <person name="Hikiji T."/>
            <person name="Kobatake N."/>
            <person name="Inagaki H."/>
            <person name="Ikema Y."/>
            <person name="Okamoto S."/>
            <person name="Okitani R."/>
            <person name="Kawakami T."/>
            <person name="Noguchi S."/>
            <person name="Itoh T."/>
            <person name="Shigeta K."/>
            <person name="Senba T."/>
            <person name="Matsumura K."/>
            <person name="Nakajima Y."/>
            <person name="Mizuno T."/>
            <person name="Morinaga M."/>
            <person name="Sasaki M."/>
            <person name="Togashi T."/>
            <person name="Oyama M."/>
            <person name="Hata H."/>
            <person name="Watanabe M."/>
            <person name="Komatsu T."/>
            <person name="Mizushima-Sugano J."/>
            <person name="Satoh T."/>
            <person name="Shirai Y."/>
            <person name="Takahashi Y."/>
            <person name="Nakagawa K."/>
            <person name="Okumura K."/>
            <person name="Nagase T."/>
            <person name="Nomura N."/>
            <person name="Kikuchi H."/>
            <person name="Masuho Y."/>
            <person name="Yamashita R."/>
            <person name="Nakai K."/>
            <person name="Yada T."/>
            <person name="Nakamura Y."/>
            <person name="Ohara O."/>
            <person name="Isogai T."/>
            <person name="Sugano S."/>
        </authorList>
    </citation>
    <scope>NUCLEOTIDE SEQUENCE [LARGE SCALE MRNA] (ISOFORMS 3 AND 4)</scope>
    <source>
        <tissue>Brain</tissue>
        <tissue>Thalamus</tissue>
    </source>
</reference>
<reference key="3">
    <citation type="journal article" date="2005" name="Nature">
        <title>DNA sequence and analysis of human chromosome 18.</title>
        <authorList>
            <person name="Nusbaum C."/>
            <person name="Zody M.C."/>
            <person name="Borowsky M.L."/>
            <person name="Kamal M."/>
            <person name="Kodira C.D."/>
            <person name="Taylor T.D."/>
            <person name="Whittaker C.A."/>
            <person name="Chang J.L."/>
            <person name="Cuomo C.A."/>
            <person name="Dewar K."/>
            <person name="FitzGerald M.G."/>
            <person name="Yang X."/>
            <person name="Abouelleil A."/>
            <person name="Allen N.R."/>
            <person name="Anderson S."/>
            <person name="Bloom T."/>
            <person name="Bugalter B."/>
            <person name="Butler J."/>
            <person name="Cook A."/>
            <person name="DeCaprio D."/>
            <person name="Engels R."/>
            <person name="Garber M."/>
            <person name="Gnirke A."/>
            <person name="Hafez N."/>
            <person name="Hall J.L."/>
            <person name="Norman C.H."/>
            <person name="Itoh T."/>
            <person name="Jaffe D.B."/>
            <person name="Kuroki Y."/>
            <person name="Lehoczky J."/>
            <person name="Lui A."/>
            <person name="Macdonald P."/>
            <person name="Mauceli E."/>
            <person name="Mikkelsen T.S."/>
            <person name="Naylor J.W."/>
            <person name="Nicol R."/>
            <person name="Nguyen C."/>
            <person name="Noguchi H."/>
            <person name="O'Leary S.B."/>
            <person name="Piqani B."/>
            <person name="Smith C.L."/>
            <person name="Talamas J.A."/>
            <person name="Topham K."/>
            <person name="Totoki Y."/>
            <person name="Toyoda A."/>
            <person name="Wain H.M."/>
            <person name="Young S.K."/>
            <person name="Zeng Q."/>
            <person name="Zimmer A.R."/>
            <person name="Fujiyama A."/>
            <person name="Hattori M."/>
            <person name="Birren B.W."/>
            <person name="Sakaki Y."/>
            <person name="Lander E.S."/>
        </authorList>
    </citation>
    <scope>NUCLEOTIDE SEQUENCE [LARGE SCALE GENOMIC DNA]</scope>
</reference>
<reference key="4">
    <citation type="journal article" date="2004" name="Genome Res.">
        <title>The status, quality, and expansion of the NIH full-length cDNA project: the Mammalian Gene Collection (MGC).</title>
        <authorList>
            <consortium name="The MGC Project Team"/>
        </authorList>
    </citation>
    <scope>NUCLEOTIDE SEQUENCE [LARGE SCALE MRNA] OF 9-638 (ISOFORM 2)</scope>
    <source>
        <tissue>Lung</tissue>
    </source>
</reference>
<reference key="5">
    <citation type="submission" date="2003-05" db="EMBL/GenBank/DDBJ databases">
        <title>Cloning of human full-length CDSs in BD Creator(TM) system donor vector.</title>
        <authorList>
            <person name="Kalnine N."/>
            <person name="Chen X."/>
            <person name="Rolfs A."/>
            <person name="Halleck A."/>
            <person name="Hines L."/>
            <person name="Eisenstein S."/>
            <person name="Koundinya M."/>
            <person name="Raphael J."/>
            <person name="Moreira D."/>
            <person name="Kelley T."/>
            <person name="LaBaer J."/>
            <person name="Lin Y."/>
            <person name="Phelan M."/>
            <person name="Farmer A."/>
        </authorList>
    </citation>
    <scope>NUCLEOTIDE SEQUENCE [LARGE SCALE MRNA] OF 115-638 (ISOFORM 2)</scope>
</reference>
<reference key="6">
    <citation type="submission" date="2004-06" db="EMBL/GenBank/DDBJ databases">
        <title>Cloning of human full open reading frames in Gateway(TM) system entry vector (pDONR201).</title>
        <authorList>
            <person name="Ebert L."/>
            <person name="Schick M."/>
            <person name="Neubert P."/>
            <person name="Schatten R."/>
            <person name="Henze S."/>
            <person name="Korn B."/>
        </authorList>
    </citation>
    <scope>NUCLEOTIDE SEQUENCE [LARGE SCALE MRNA] OF 115-638 (ISOFORM 2)</scope>
</reference>
<reference key="7">
    <citation type="journal article" date="1998" name="Nat. Biotechnol.">
        <title>Selection system for genes encoding nuclear-targeted proteins.</title>
        <authorList>
            <person name="Ueki N."/>
            <person name="Oda T."/>
            <person name="Kondo M."/>
            <person name="Yano K."/>
            <person name="Noguchi T."/>
            <person name="Muramatsu M.-A."/>
        </authorList>
    </citation>
    <scope>NUCLEOTIDE SEQUENCE [LARGE SCALE MRNA] OF 336-638 (ISOFORM 1)</scope>
    <scope>SUBCELLULAR LOCATION</scope>
    <source>
        <tissue>Fetal brain</tissue>
    </source>
</reference>
<protein>
    <recommendedName>
        <fullName>Nucleolar protein 4</fullName>
    </recommendedName>
    <alternativeName>
        <fullName>Nucleolar-localized protein</fullName>
    </alternativeName>
</protein>
<keyword id="KW-0025">Alternative splicing</keyword>
<keyword id="KW-0539">Nucleus</keyword>
<keyword id="KW-1267">Proteomics identification</keyword>
<keyword id="KW-1185">Reference proteome</keyword>
<accession>O94818</accession>
<accession>B4DSQ0</accession>
<accession>B7Z3Z7</accession>
<accession>F5H1E3</accession>
<accession>Q6IBS2</accession>
<accession>Q9BWF1</accession>